<dbReference type="EC" id="3.6.-.-" evidence="1"/>
<dbReference type="EMBL" id="CP000285">
    <property type="protein sequence ID" value="ABE60659.1"/>
    <property type="molecule type" value="Genomic_DNA"/>
</dbReference>
<dbReference type="RefSeq" id="WP_011508605.1">
    <property type="nucleotide sequence ID" value="NC_007963.1"/>
</dbReference>
<dbReference type="SMR" id="Q1QS99"/>
<dbReference type="STRING" id="290398.Csal_3315"/>
<dbReference type="GeneID" id="95336006"/>
<dbReference type="KEGG" id="csa:Csal_3315"/>
<dbReference type="eggNOG" id="COG0486">
    <property type="taxonomic scope" value="Bacteria"/>
</dbReference>
<dbReference type="HOGENOM" id="CLU_019624_4_1_6"/>
<dbReference type="OrthoDB" id="9805918at2"/>
<dbReference type="Proteomes" id="UP000000239">
    <property type="component" value="Chromosome"/>
</dbReference>
<dbReference type="GO" id="GO:0005829">
    <property type="term" value="C:cytosol"/>
    <property type="evidence" value="ECO:0007669"/>
    <property type="project" value="TreeGrafter"/>
</dbReference>
<dbReference type="GO" id="GO:0005525">
    <property type="term" value="F:GTP binding"/>
    <property type="evidence" value="ECO:0007669"/>
    <property type="project" value="UniProtKB-UniRule"/>
</dbReference>
<dbReference type="GO" id="GO:0003924">
    <property type="term" value="F:GTPase activity"/>
    <property type="evidence" value="ECO:0007669"/>
    <property type="project" value="UniProtKB-UniRule"/>
</dbReference>
<dbReference type="GO" id="GO:0046872">
    <property type="term" value="F:metal ion binding"/>
    <property type="evidence" value="ECO:0007669"/>
    <property type="project" value="UniProtKB-KW"/>
</dbReference>
<dbReference type="GO" id="GO:0030488">
    <property type="term" value="P:tRNA methylation"/>
    <property type="evidence" value="ECO:0007669"/>
    <property type="project" value="TreeGrafter"/>
</dbReference>
<dbReference type="GO" id="GO:0002098">
    <property type="term" value="P:tRNA wobble uridine modification"/>
    <property type="evidence" value="ECO:0007669"/>
    <property type="project" value="TreeGrafter"/>
</dbReference>
<dbReference type="CDD" id="cd04164">
    <property type="entry name" value="trmE"/>
    <property type="match status" value="1"/>
</dbReference>
<dbReference type="CDD" id="cd14858">
    <property type="entry name" value="TrmE_N"/>
    <property type="match status" value="1"/>
</dbReference>
<dbReference type="FunFam" id="3.30.1360.120:FF:000001">
    <property type="entry name" value="tRNA modification GTPase MnmE"/>
    <property type="match status" value="1"/>
</dbReference>
<dbReference type="FunFam" id="3.40.50.300:FF:000249">
    <property type="entry name" value="tRNA modification GTPase MnmE"/>
    <property type="match status" value="1"/>
</dbReference>
<dbReference type="Gene3D" id="3.40.50.300">
    <property type="entry name" value="P-loop containing nucleotide triphosphate hydrolases"/>
    <property type="match status" value="1"/>
</dbReference>
<dbReference type="Gene3D" id="3.30.1360.120">
    <property type="entry name" value="Probable tRNA modification gtpase trme, domain 1"/>
    <property type="match status" value="1"/>
</dbReference>
<dbReference type="Gene3D" id="1.20.120.430">
    <property type="entry name" value="tRNA modification GTPase MnmE domain 2"/>
    <property type="match status" value="1"/>
</dbReference>
<dbReference type="HAMAP" id="MF_00379">
    <property type="entry name" value="GTPase_MnmE"/>
    <property type="match status" value="1"/>
</dbReference>
<dbReference type="InterPro" id="IPR031168">
    <property type="entry name" value="G_TrmE"/>
</dbReference>
<dbReference type="InterPro" id="IPR006073">
    <property type="entry name" value="GTP-bd"/>
</dbReference>
<dbReference type="InterPro" id="IPR018948">
    <property type="entry name" value="GTP-bd_TrmE_N"/>
</dbReference>
<dbReference type="InterPro" id="IPR004520">
    <property type="entry name" value="GTPase_MnmE"/>
</dbReference>
<dbReference type="InterPro" id="IPR027368">
    <property type="entry name" value="MnmE_dom2"/>
</dbReference>
<dbReference type="InterPro" id="IPR025867">
    <property type="entry name" value="MnmE_helical"/>
</dbReference>
<dbReference type="InterPro" id="IPR027417">
    <property type="entry name" value="P-loop_NTPase"/>
</dbReference>
<dbReference type="InterPro" id="IPR005225">
    <property type="entry name" value="Small_GTP-bd"/>
</dbReference>
<dbReference type="InterPro" id="IPR027266">
    <property type="entry name" value="TrmE/GcvT_dom1"/>
</dbReference>
<dbReference type="NCBIfam" id="TIGR00450">
    <property type="entry name" value="mnmE_trmE_thdF"/>
    <property type="match status" value="1"/>
</dbReference>
<dbReference type="NCBIfam" id="NF003661">
    <property type="entry name" value="PRK05291.1-3"/>
    <property type="match status" value="1"/>
</dbReference>
<dbReference type="NCBIfam" id="TIGR00231">
    <property type="entry name" value="small_GTP"/>
    <property type="match status" value="1"/>
</dbReference>
<dbReference type="PANTHER" id="PTHR42714">
    <property type="entry name" value="TRNA MODIFICATION GTPASE GTPBP3"/>
    <property type="match status" value="1"/>
</dbReference>
<dbReference type="PANTHER" id="PTHR42714:SF2">
    <property type="entry name" value="TRNA MODIFICATION GTPASE GTPBP3, MITOCHONDRIAL"/>
    <property type="match status" value="1"/>
</dbReference>
<dbReference type="Pfam" id="PF01926">
    <property type="entry name" value="MMR_HSR1"/>
    <property type="match status" value="1"/>
</dbReference>
<dbReference type="Pfam" id="PF12631">
    <property type="entry name" value="MnmE_helical"/>
    <property type="match status" value="1"/>
</dbReference>
<dbReference type="Pfam" id="PF10396">
    <property type="entry name" value="TrmE_N"/>
    <property type="match status" value="1"/>
</dbReference>
<dbReference type="SUPFAM" id="SSF52540">
    <property type="entry name" value="P-loop containing nucleoside triphosphate hydrolases"/>
    <property type="match status" value="1"/>
</dbReference>
<dbReference type="SUPFAM" id="SSF116878">
    <property type="entry name" value="TrmE connector domain"/>
    <property type="match status" value="1"/>
</dbReference>
<dbReference type="PROSITE" id="PS51709">
    <property type="entry name" value="G_TRME"/>
    <property type="match status" value="1"/>
</dbReference>
<name>MNME_CHRSD</name>
<comment type="function">
    <text evidence="1">Exhibits a very high intrinsic GTPase hydrolysis rate. Involved in the addition of a carboxymethylaminomethyl (cmnm) group at the wobble position (U34) of certain tRNAs, forming tRNA-cmnm(5)s(2)U34.</text>
</comment>
<comment type="cofactor">
    <cofactor evidence="1">
        <name>K(+)</name>
        <dbReference type="ChEBI" id="CHEBI:29103"/>
    </cofactor>
    <text evidence="1">Binds 1 potassium ion per subunit.</text>
</comment>
<comment type="subunit">
    <text evidence="1">Homodimer. Heterotetramer of two MnmE and two MnmG subunits.</text>
</comment>
<comment type="subcellular location">
    <subcellularLocation>
        <location evidence="1">Cytoplasm</location>
    </subcellularLocation>
</comment>
<comment type="similarity">
    <text evidence="1">Belongs to the TRAFAC class TrmE-Era-EngA-EngB-Septin-like GTPase superfamily. TrmE GTPase family.</text>
</comment>
<gene>
    <name evidence="1" type="primary">mnmE</name>
    <name evidence="1" type="synonym">trmE</name>
    <name type="ordered locus">Csal_3315</name>
</gene>
<reference key="1">
    <citation type="journal article" date="2011" name="Stand. Genomic Sci.">
        <title>Complete genome sequence of the halophilic and highly halotolerant Chromohalobacter salexigens type strain (1H11(T)).</title>
        <authorList>
            <person name="Copeland A."/>
            <person name="O'Connor K."/>
            <person name="Lucas S."/>
            <person name="Lapidus A."/>
            <person name="Berry K.W."/>
            <person name="Detter J.C."/>
            <person name="Del Rio T.G."/>
            <person name="Hammon N."/>
            <person name="Dalin E."/>
            <person name="Tice H."/>
            <person name="Pitluck S."/>
            <person name="Bruce D."/>
            <person name="Goodwin L."/>
            <person name="Han C."/>
            <person name="Tapia R."/>
            <person name="Saunders E."/>
            <person name="Schmutz J."/>
            <person name="Brettin T."/>
            <person name="Larimer F."/>
            <person name="Land M."/>
            <person name="Hauser L."/>
            <person name="Vargas C."/>
            <person name="Nieto J.J."/>
            <person name="Kyrpides N.C."/>
            <person name="Ivanova N."/>
            <person name="Goker M."/>
            <person name="Klenk H.P."/>
            <person name="Csonka L.N."/>
            <person name="Woyke T."/>
        </authorList>
    </citation>
    <scope>NUCLEOTIDE SEQUENCE [LARGE SCALE GENOMIC DNA]</scope>
    <source>
        <strain>ATCC BAA-138 / DSM 3043 / CIP 106854 / NCIMB 13768 / 1H11</strain>
    </source>
</reference>
<keyword id="KW-0963">Cytoplasm</keyword>
<keyword id="KW-0342">GTP-binding</keyword>
<keyword id="KW-0378">Hydrolase</keyword>
<keyword id="KW-0460">Magnesium</keyword>
<keyword id="KW-0479">Metal-binding</keyword>
<keyword id="KW-0547">Nucleotide-binding</keyword>
<keyword id="KW-0630">Potassium</keyword>
<keyword id="KW-1185">Reference proteome</keyword>
<keyword id="KW-0819">tRNA processing</keyword>
<evidence type="ECO:0000255" key="1">
    <source>
        <dbReference type="HAMAP-Rule" id="MF_00379"/>
    </source>
</evidence>
<protein>
    <recommendedName>
        <fullName evidence="1">tRNA modification GTPase MnmE</fullName>
        <ecNumber evidence="1">3.6.-.-</ecNumber>
    </recommendedName>
</protein>
<sequence length="458" mass="49247">MTATPLYRQDTIAAIATPPGRGGVGIIRLSGPASRDLAERILGHCPAPRHAHYGPFYDADAQVLDEGIALFFPGPHSFTGEDVLELQGHGGPVIMDLLLARCVALGARLARPGEFSERAFLNDKLDLAQAEAIADLIDASSRAAAENALRSLQGEFSTRVSALVDKLIELRMFVEAAIDFPEEEIDFLADGKVAAMLQGAQETLGEVRAAAGQGALMREGMNVVIAGRPNAGKSSLLNALTERDSAIVTDIEGTTRDVLREYIHIDGMPLHVIDTAGLRDTPDAIEKIGVARAWEEIEKADRVLLLVDATTTTQTDPMQLWPEFVARLPHPERLTLVRNKIDESGETEQSDLSTSPPIVRLSAKTGLGVDNLKEHLKAVMGFDATTEGRFSARRRHLDALDRAGDALDNGIAQLRGHGAGELLAEDLRDAQQALSEITGEFTADDLLGEIFGSFCIGK</sequence>
<accession>Q1QS99</accession>
<proteinExistence type="inferred from homology"/>
<organism>
    <name type="scientific">Chromohalobacter salexigens (strain ATCC BAA-138 / DSM 3043 / CIP 106854 / NCIMB 13768 / 1H11)</name>
    <dbReference type="NCBI Taxonomy" id="290398"/>
    <lineage>
        <taxon>Bacteria</taxon>
        <taxon>Pseudomonadati</taxon>
        <taxon>Pseudomonadota</taxon>
        <taxon>Gammaproteobacteria</taxon>
        <taxon>Oceanospirillales</taxon>
        <taxon>Halomonadaceae</taxon>
        <taxon>Chromohalobacter</taxon>
    </lineage>
</organism>
<feature type="chain" id="PRO_0000345761" description="tRNA modification GTPase MnmE">
    <location>
        <begin position="1"/>
        <end position="458"/>
    </location>
</feature>
<feature type="domain" description="TrmE-type G">
    <location>
        <begin position="220"/>
        <end position="381"/>
    </location>
</feature>
<feature type="binding site" evidence="1">
    <location>
        <position position="28"/>
    </location>
    <ligand>
        <name>(6S)-5-formyl-5,6,7,8-tetrahydrofolate</name>
        <dbReference type="ChEBI" id="CHEBI:57457"/>
    </ligand>
</feature>
<feature type="binding site" evidence="1">
    <location>
        <position position="85"/>
    </location>
    <ligand>
        <name>(6S)-5-formyl-5,6,7,8-tetrahydrofolate</name>
        <dbReference type="ChEBI" id="CHEBI:57457"/>
    </ligand>
</feature>
<feature type="binding site" evidence="1">
    <location>
        <position position="124"/>
    </location>
    <ligand>
        <name>(6S)-5-formyl-5,6,7,8-tetrahydrofolate</name>
        <dbReference type="ChEBI" id="CHEBI:57457"/>
    </ligand>
</feature>
<feature type="binding site" evidence="1">
    <location>
        <begin position="230"/>
        <end position="235"/>
    </location>
    <ligand>
        <name>GTP</name>
        <dbReference type="ChEBI" id="CHEBI:37565"/>
    </ligand>
</feature>
<feature type="binding site" evidence="1">
    <location>
        <position position="230"/>
    </location>
    <ligand>
        <name>K(+)</name>
        <dbReference type="ChEBI" id="CHEBI:29103"/>
    </ligand>
</feature>
<feature type="binding site" evidence="1">
    <location>
        <position position="234"/>
    </location>
    <ligand>
        <name>Mg(2+)</name>
        <dbReference type="ChEBI" id="CHEBI:18420"/>
    </ligand>
</feature>
<feature type="binding site" evidence="1">
    <location>
        <begin position="249"/>
        <end position="255"/>
    </location>
    <ligand>
        <name>GTP</name>
        <dbReference type="ChEBI" id="CHEBI:37565"/>
    </ligand>
</feature>
<feature type="binding site" evidence="1">
    <location>
        <position position="249"/>
    </location>
    <ligand>
        <name>K(+)</name>
        <dbReference type="ChEBI" id="CHEBI:29103"/>
    </ligand>
</feature>
<feature type="binding site" evidence="1">
    <location>
        <position position="251"/>
    </location>
    <ligand>
        <name>K(+)</name>
        <dbReference type="ChEBI" id="CHEBI:29103"/>
    </ligand>
</feature>
<feature type="binding site" evidence="1">
    <location>
        <position position="254"/>
    </location>
    <ligand>
        <name>K(+)</name>
        <dbReference type="ChEBI" id="CHEBI:29103"/>
    </ligand>
</feature>
<feature type="binding site" evidence="1">
    <location>
        <position position="255"/>
    </location>
    <ligand>
        <name>Mg(2+)</name>
        <dbReference type="ChEBI" id="CHEBI:18420"/>
    </ligand>
</feature>
<feature type="binding site" evidence="1">
    <location>
        <begin position="274"/>
        <end position="277"/>
    </location>
    <ligand>
        <name>GTP</name>
        <dbReference type="ChEBI" id="CHEBI:37565"/>
    </ligand>
</feature>
<feature type="binding site" evidence="1">
    <location>
        <position position="458"/>
    </location>
    <ligand>
        <name>(6S)-5-formyl-5,6,7,8-tetrahydrofolate</name>
        <dbReference type="ChEBI" id="CHEBI:57457"/>
    </ligand>
</feature>